<proteinExistence type="evidence at protein level"/>
<keyword id="KW-0929">Antimicrobial</keyword>
<keyword id="KW-0134">Cell wall</keyword>
<keyword id="KW-0903">Direct protein sequencing</keyword>
<keyword id="KW-1015">Disulfide bond</keyword>
<keyword id="KW-0611">Plant defense</keyword>
<keyword id="KW-1185">Reference proteome</keyword>
<keyword id="KW-0964">Secreted</keyword>
<keyword id="KW-0732">Signal</keyword>
<dbReference type="EMBL" id="AJ312904">
    <property type="protein sequence ID" value="CAC44012.1"/>
    <property type="molecule type" value="mRNA"/>
</dbReference>
<dbReference type="EMBL" id="AJ312424">
    <property type="protein sequence ID" value="CAC44011.1"/>
    <property type="molecule type" value="Genomic_DNA"/>
</dbReference>
<dbReference type="EMBL" id="EF112176">
    <property type="protein sequence ID" value="ABL74292.1"/>
    <property type="molecule type" value="Genomic_DNA"/>
</dbReference>
<dbReference type="RefSeq" id="NP_001275092.1">
    <property type="nucleotide sequence ID" value="NM_001288163.1"/>
</dbReference>
<dbReference type="SMR" id="Q93X17"/>
<dbReference type="FunCoup" id="Q93X17">
    <property type="interactions" value="65"/>
</dbReference>
<dbReference type="STRING" id="4113.Q93X17"/>
<dbReference type="PaxDb" id="4113-PGSC0003DMT400004046"/>
<dbReference type="EnsemblPlants" id="PGSC0003DMT400004046">
    <property type="protein sequence ID" value="PGSC0003DMT400004046"/>
    <property type="gene ID" value="PGSC0003DMG400001598"/>
</dbReference>
<dbReference type="EnsemblPlants" id="RHC01H1G4608.2.1">
    <property type="protein sequence ID" value="RHC01H1G4608.2.1"/>
    <property type="gene ID" value="RHC01H1G4608.2"/>
</dbReference>
<dbReference type="GeneID" id="102582131"/>
<dbReference type="Gramene" id="PGSC0003DMT400004046">
    <property type="protein sequence ID" value="PGSC0003DMT400004046"/>
    <property type="gene ID" value="PGSC0003DMG400001598"/>
</dbReference>
<dbReference type="Gramene" id="RHC01H1G4608.2.1">
    <property type="protein sequence ID" value="RHC01H1G4608.2.1"/>
    <property type="gene ID" value="RHC01H1G4608.2"/>
</dbReference>
<dbReference type="KEGG" id="sot:102582131"/>
<dbReference type="eggNOG" id="ENOG502S3Z7">
    <property type="taxonomic scope" value="Eukaryota"/>
</dbReference>
<dbReference type="HOGENOM" id="CLU_142643_1_1_1"/>
<dbReference type="InParanoid" id="Q93X17"/>
<dbReference type="OMA" id="KKNGYGP"/>
<dbReference type="OrthoDB" id="625265at2759"/>
<dbReference type="Proteomes" id="UP000011115">
    <property type="component" value="Unassembled WGS sequence"/>
</dbReference>
<dbReference type="ExpressionAtlas" id="Q93X17">
    <property type="expression patterns" value="baseline and differential"/>
</dbReference>
<dbReference type="GO" id="GO:0005576">
    <property type="term" value="C:extracellular region"/>
    <property type="evidence" value="ECO:0007669"/>
    <property type="project" value="UniProtKB-KW"/>
</dbReference>
<dbReference type="GO" id="GO:0006952">
    <property type="term" value="P:defense response"/>
    <property type="evidence" value="ECO:0007669"/>
    <property type="project" value="UniProtKB-KW"/>
</dbReference>
<dbReference type="InterPro" id="IPR003854">
    <property type="entry name" value="GASA"/>
</dbReference>
<dbReference type="PANTHER" id="PTHR23201">
    <property type="entry name" value="EXTENSIN, PROLINE-RICH PROTEIN"/>
    <property type="match status" value="1"/>
</dbReference>
<dbReference type="PANTHER" id="PTHR23201:SF2">
    <property type="entry name" value="GIBBERELLIN-REGULATED PROTEIN 1-RELATED"/>
    <property type="match status" value="1"/>
</dbReference>
<dbReference type="Pfam" id="PF02704">
    <property type="entry name" value="GASA"/>
    <property type="match status" value="1"/>
</dbReference>
<comment type="function">
    <text evidence="2">Has an antimicrobial activity. Causes a rapid aggregation of both Gram-positive and Gram-negative bacteria, but the antimicrobial activity is not correlated with the capacity to aggregate bacteria.</text>
</comment>
<comment type="subcellular location">
    <subcellularLocation>
        <location>Secreted</location>
        <location>Cell wall</location>
    </subcellularLocation>
</comment>
<comment type="tissue specificity">
    <text evidence="2">Expressed in tubers, stems, flowers, shoot apex and leaves, but not in roots or stolons.</text>
</comment>
<comment type="induction">
    <text evidence="2">Locally up-regulated by abscisic acid, wounding and infection with compatible fungus. Down-regulated by gibberellic acid or infection with virulent bacteria. No responses to ethylene or abiotic stresses.</text>
</comment>
<comment type="PTM">
    <text>Six disulfide bonds may be present.</text>
</comment>
<comment type="similarity">
    <text evidence="3">Belongs to the GASA family.</text>
</comment>
<organism>
    <name type="scientific">Solanum tuberosum</name>
    <name type="common">Potato</name>
    <dbReference type="NCBI Taxonomy" id="4113"/>
    <lineage>
        <taxon>Eukaryota</taxon>
        <taxon>Viridiplantae</taxon>
        <taxon>Streptophyta</taxon>
        <taxon>Embryophyta</taxon>
        <taxon>Tracheophyta</taxon>
        <taxon>Spermatophyta</taxon>
        <taxon>Magnoliopsida</taxon>
        <taxon>eudicotyledons</taxon>
        <taxon>Gunneridae</taxon>
        <taxon>Pentapetalae</taxon>
        <taxon>asterids</taxon>
        <taxon>lamiids</taxon>
        <taxon>Solanales</taxon>
        <taxon>Solanaceae</taxon>
        <taxon>Solanoideae</taxon>
        <taxon>Solaneae</taxon>
        <taxon>Solanum</taxon>
    </lineage>
</organism>
<evidence type="ECO:0000255" key="1"/>
<evidence type="ECO:0000269" key="2">
    <source>
    </source>
</evidence>
<evidence type="ECO:0000305" key="3"/>
<gene>
    <name type="primary">SN2</name>
</gene>
<name>SNAK2_SOLTU</name>
<feature type="signal peptide" evidence="1">
    <location>
        <begin position="1"/>
        <end position="23"/>
    </location>
</feature>
<feature type="propeptide" id="PRO_0000348600" description="Removed in mature form" evidence="2">
    <location>
        <begin position="24"/>
        <end position="38"/>
    </location>
</feature>
<feature type="chain" id="PRO_5000067536" description="Snakin-2">
    <location>
        <begin position="39"/>
        <end position="104"/>
    </location>
</feature>
<feature type="sequence conflict" description="In Ref. 3; ABL74292." evidence="3" ref="3">
    <original>AS</original>
    <variation>DI</variation>
    <location>
        <begin position="9"/>
        <end position="10"/>
    </location>
</feature>
<feature type="sequence conflict" description="In Ref. 3; ABL74292." evidence="3" ref="3">
    <original>LSLL</original>
    <variation>RSVQ</variation>
    <location>
        <begin position="13"/>
        <end position="16"/>
    </location>
</feature>
<feature type="sequence conflict" description="In Ref. 1; CAC44011." evidence="3" ref="1">
    <original>D</original>
    <variation>G</variation>
    <location>
        <position position="45"/>
    </location>
</feature>
<protein>
    <recommendedName>
        <fullName>Snakin-2</fullName>
    </recommendedName>
</protein>
<reference key="1">
    <citation type="journal article" date="2002" name="Plant Physiol.">
        <title>Snakin-2, an antimicrobial peptide from potato whose gene is locally induced by wounding and responds to pathogen infection.</title>
        <authorList>
            <person name="Berrocal-Lobo M."/>
            <person name="Segura A."/>
            <person name="Moreno M."/>
            <person name="Lopez G."/>
            <person name="Garcia-Olmedo F."/>
            <person name="Molina A."/>
        </authorList>
    </citation>
    <scope>NUCLEOTIDE SEQUENCE [GENOMIC DNA / MRNA]</scope>
    <scope>PROTEIN SEQUENCE OF 39-54</scope>
    <scope>FUNCTION</scope>
    <scope>TISSUE SPECIFICITY</scope>
    <scope>INDUCTION</scope>
    <source>
        <strain>cv. Jaerla</strain>
        <tissue>Tuber</tissue>
    </source>
</reference>
<reference key="2">
    <citation type="journal article" date="2011" name="Nature">
        <title>Genome sequence and analysis of the tuber crop potato.</title>
        <authorList>
            <consortium name="The Potato Genome Sequencing Consortium"/>
        </authorList>
    </citation>
    <scope>NUCLEOTIDE SEQUENCE [LARGE SCALE GENOMIC DNA]</scope>
    <source>
        <strain>cv. DM1-3 516 R44</strain>
    </source>
</reference>
<reference key="3">
    <citation type="submission" date="2006-11" db="EMBL/GenBank/DDBJ databases">
        <title>Cloning and characterization of Snakin2 gene from potato.</title>
        <authorList>
            <person name="Krishnamurthy K."/>
            <person name="Contractor S.S."/>
            <person name="Silja P."/>
            <person name="Girigoudar S."/>
            <person name="Melgiri P.S."/>
            <person name="Gai P.B."/>
        </authorList>
    </citation>
    <scope>NUCLEOTIDE SEQUENCE [GENOMIC DNA] OF 1-94</scope>
</reference>
<accession>Q93X17</accession>
<accession>A1YN11</accession>
<accession>Q948Z5</accession>
<sequence length="104" mass="11038">MAISKALFASLLLSLLLLEQVQSIQTDQVTSNAISEAAYSYKKIDCGGACAARCRLSSRPRLCNRACGTCCARCNCVPPGTSGNTETCPCYASLTTHGNKRKCP</sequence>